<proteinExistence type="inferred from homology"/>
<gene>
    <name evidence="1" type="primary">miaB</name>
    <name type="ordered locus">RB9401</name>
</gene>
<feature type="chain" id="PRO_0000374492" description="tRNA-2-methylthio-N(6)-dimethylallyladenosine synthase">
    <location>
        <begin position="1"/>
        <end position="479"/>
    </location>
</feature>
<feature type="domain" description="MTTase N-terminal" evidence="1">
    <location>
        <begin position="6"/>
        <end position="122"/>
    </location>
</feature>
<feature type="domain" description="Radical SAM core" evidence="2">
    <location>
        <begin position="158"/>
        <end position="390"/>
    </location>
</feature>
<feature type="domain" description="TRAM" evidence="1">
    <location>
        <begin position="393"/>
        <end position="464"/>
    </location>
</feature>
<feature type="binding site" evidence="1">
    <location>
        <position position="15"/>
    </location>
    <ligand>
        <name>[4Fe-4S] cluster</name>
        <dbReference type="ChEBI" id="CHEBI:49883"/>
        <label>1</label>
    </ligand>
</feature>
<feature type="binding site" evidence="1">
    <location>
        <position position="51"/>
    </location>
    <ligand>
        <name>[4Fe-4S] cluster</name>
        <dbReference type="ChEBI" id="CHEBI:49883"/>
        <label>1</label>
    </ligand>
</feature>
<feature type="binding site" evidence="1">
    <location>
        <position position="85"/>
    </location>
    <ligand>
        <name>[4Fe-4S] cluster</name>
        <dbReference type="ChEBI" id="CHEBI:49883"/>
        <label>1</label>
    </ligand>
</feature>
<feature type="binding site" evidence="1">
    <location>
        <position position="172"/>
    </location>
    <ligand>
        <name>[4Fe-4S] cluster</name>
        <dbReference type="ChEBI" id="CHEBI:49883"/>
        <label>2</label>
        <note>4Fe-4S-S-AdoMet</note>
    </ligand>
</feature>
<feature type="binding site" evidence="1">
    <location>
        <position position="176"/>
    </location>
    <ligand>
        <name>[4Fe-4S] cluster</name>
        <dbReference type="ChEBI" id="CHEBI:49883"/>
        <label>2</label>
        <note>4Fe-4S-S-AdoMet</note>
    </ligand>
</feature>
<feature type="binding site" evidence="1">
    <location>
        <position position="179"/>
    </location>
    <ligand>
        <name>[4Fe-4S] cluster</name>
        <dbReference type="ChEBI" id="CHEBI:49883"/>
        <label>2</label>
        <note>4Fe-4S-S-AdoMet</note>
    </ligand>
</feature>
<dbReference type="EC" id="2.8.4.3" evidence="1"/>
<dbReference type="EMBL" id="BX294149">
    <property type="protein sequence ID" value="CAD76240.1"/>
    <property type="molecule type" value="Genomic_DNA"/>
</dbReference>
<dbReference type="RefSeq" id="NP_868863.1">
    <property type="nucleotide sequence ID" value="NC_005027.1"/>
</dbReference>
<dbReference type="RefSeq" id="WP_011122282.1">
    <property type="nucleotide sequence ID" value="NC_005027.1"/>
</dbReference>
<dbReference type="SMR" id="Q7ULM9"/>
<dbReference type="FunCoup" id="Q7ULM9">
    <property type="interactions" value="522"/>
</dbReference>
<dbReference type="STRING" id="243090.RB9401"/>
<dbReference type="EnsemblBacteria" id="CAD76240">
    <property type="protein sequence ID" value="CAD76240"/>
    <property type="gene ID" value="RB9401"/>
</dbReference>
<dbReference type="KEGG" id="rba:RB9401"/>
<dbReference type="PATRIC" id="fig|243090.15.peg.4503"/>
<dbReference type="eggNOG" id="COG0621">
    <property type="taxonomic scope" value="Bacteria"/>
</dbReference>
<dbReference type="HOGENOM" id="CLU_018697_2_2_0"/>
<dbReference type="InParanoid" id="Q7ULM9"/>
<dbReference type="OrthoDB" id="9805215at2"/>
<dbReference type="Proteomes" id="UP000001025">
    <property type="component" value="Chromosome"/>
</dbReference>
<dbReference type="GO" id="GO:0005829">
    <property type="term" value="C:cytosol"/>
    <property type="evidence" value="ECO:0000318"/>
    <property type="project" value="GO_Central"/>
</dbReference>
<dbReference type="GO" id="GO:0051539">
    <property type="term" value="F:4 iron, 4 sulfur cluster binding"/>
    <property type="evidence" value="ECO:0000318"/>
    <property type="project" value="GO_Central"/>
</dbReference>
<dbReference type="GO" id="GO:0046872">
    <property type="term" value="F:metal ion binding"/>
    <property type="evidence" value="ECO:0007669"/>
    <property type="project" value="UniProtKB-KW"/>
</dbReference>
<dbReference type="GO" id="GO:0035597">
    <property type="term" value="F:N6-isopentenyladenosine methylthiotransferase activity"/>
    <property type="evidence" value="ECO:0000318"/>
    <property type="project" value="GO_Central"/>
</dbReference>
<dbReference type="GO" id="GO:0035600">
    <property type="term" value="P:tRNA methylthiolation"/>
    <property type="evidence" value="ECO:0000318"/>
    <property type="project" value="GO_Central"/>
</dbReference>
<dbReference type="CDD" id="cd01335">
    <property type="entry name" value="Radical_SAM"/>
    <property type="match status" value="1"/>
</dbReference>
<dbReference type="FunFam" id="3.40.50.12160:FF:000003">
    <property type="entry name" value="CDK5 regulatory subunit-associated protein 1"/>
    <property type="match status" value="1"/>
</dbReference>
<dbReference type="FunFam" id="3.80.30.20:FF:000001">
    <property type="entry name" value="tRNA-2-methylthio-N(6)-dimethylallyladenosine synthase 2"/>
    <property type="match status" value="1"/>
</dbReference>
<dbReference type="Gene3D" id="3.40.50.12160">
    <property type="entry name" value="Methylthiotransferase, N-terminal domain"/>
    <property type="match status" value="1"/>
</dbReference>
<dbReference type="Gene3D" id="3.80.30.20">
    <property type="entry name" value="tm_1862 like domain"/>
    <property type="match status" value="1"/>
</dbReference>
<dbReference type="HAMAP" id="MF_01864">
    <property type="entry name" value="tRNA_metthiotr_MiaB"/>
    <property type="match status" value="1"/>
</dbReference>
<dbReference type="InterPro" id="IPR006638">
    <property type="entry name" value="Elp3/MiaA/NifB-like_rSAM"/>
</dbReference>
<dbReference type="InterPro" id="IPR005839">
    <property type="entry name" value="Methylthiotransferase"/>
</dbReference>
<dbReference type="InterPro" id="IPR020612">
    <property type="entry name" value="Methylthiotransferase_CS"/>
</dbReference>
<dbReference type="InterPro" id="IPR013848">
    <property type="entry name" value="Methylthiotransferase_N"/>
</dbReference>
<dbReference type="InterPro" id="IPR038135">
    <property type="entry name" value="Methylthiotransferase_N_sf"/>
</dbReference>
<dbReference type="InterPro" id="IPR006463">
    <property type="entry name" value="MiaB_methiolase"/>
</dbReference>
<dbReference type="InterPro" id="IPR007197">
    <property type="entry name" value="rSAM"/>
</dbReference>
<dbReference type="InterPro" id="IPR023404">
    <property type="entry name" value="rSAM_horseshoe"/>
</dbReference>
<dbReference type="InterPro" id="IPR002792">
    <property type="entry name" value="TRAM_dom"/>
</dbReference>
<dbReference type="NCBIfam" id="TIGR01574">
    <property type="entry name" value="miaB-methiolase"/>
    <property type="match status" value="1"/>
</dbReference>
<dbReference type="NCBIfam" id="TIGR00089">
    <property type="entry name" value="MiaB/RimO family radical SAM methylthiotransferase"/>
    <property type="match status" value="1"/>
</dbReference>
<dbReference type="PANTHER" id="PTHR43020">
    <property type="entry name" value="CDK5 REGULATORY SUBUNIT-ASSOCIATED PROTEIN 1"/>
    <property type="match status" value="1"/>
</dbReference>
<dbReference type="PANTHER" id="PTHR43020:SF2">
    <property type="entry name" value="MITOCHONDRIAL TRNA METHYLTHIOTRANSFERASE CDK5RAP1"/>
    <property type="match status" value="1"/>
</dbReference>
<dbReference type="Pfam" id="PF04055">
    <property type="entry name" value="Radical_SAM"/>
    <property type="match status" value="1"/>
</dbReference>
<dbReference type="Pfam" id="PF01938">
    <property type="entry name" value="TRAM"/>
    <property type="match status" value="1"/>
</dbReference>
<dbReference type="Pfam" id="PF00919">
    <property type="entry name" value="UPF0004"/>
    <property type="match status" value="1"/>
</dbReference>
<dbReference type="SFLD" id="SFLDF00273">
    <property type="entry name" value="(dimethylallyl)adenosine_tRNA"/>
    <property type="match status" value="1"/>
</dbReference>
<dbReference type="SFLD" id="SFLDG01082">
    <property type="entry name" value="B12-binding_domain_containing"/>
    <property type="match status" value="1"/>
</dbReference>
<dbReference type="SFLD" id="SFLDG01061">
    <property type="entry name" value="methylthiotransferase"/>
    <property type="match status" value="1"/>
</dbReference>
<dbReference type="SMART" id="SM00729">
    <property type="entry name" value="Elp3"/>
    <property type="match status" value="1"/>
</dbReference>
<dbReference type="SUPFAM" id="SSF102114">
    <property type="entry name" value="Radical SAM enzymes"/>
    <property type="match status" value="1"/>
</dbReference>
<dbReference type="PROSITE" id="PS51449">
    <property type="entry name" value="MTTASE_N"/>
    <property type="match status" value="1"/>
</dbReference>
<dbReference type="PROSITE" id="PS01278">
    <property type="entry name" value="MTTASE_RADICAL"/>
    <property type="match status" value="1"/>
</dbReference>
<dbReference type="PROSITE" id="PS51918">
    <property type="entry name" value="RADICAL_SAM"/>
    <property type="match status" value="1"/>
</dbReference>
<dbReference type="PROSITE" id="PS50926">
    <property type="entry name" value="TRAM"/>
    <property type="match status" value="1"/>
</dbReference>
<name>MIAB_RHOBA</name>
<comment type="function">
    <text evidence="1">Catalyzes the methylthiolation of N6-(dimethylallyl)adenosine (i(6)A), leading to the formation of 2-methylthio-N6-(dimethylallyl)adenosine (ms(2)i(6)A) at position 37 in tRNAs that read codons beginning with uridine.</text>
</comment>
<comment type="catalytic activity">
    <reaction evidence="1">
        <text>N(6)-dimethylallyladenosine(37) in tRNA + (sulfur carrier)-SH + AH2 + 2 S-adenosyl-L-methionine = 2-methylsulfanyl-N(6)-dimethylallyladenosine(37) in tRNA + (sulfur carrier)-H + 5'-deoxyadenosine + L-methionine + A + S-adenosyl-L-homocysteine + 2 H(+)</text>
        <dbReference type="Rhea" id="RHEA:37067"/>
        <dbReference type="Rhea" id="RHEA-COMP:10375"/>
        <dbReference type="Rhea" id="RHEA-COMP:10376"/>
        <dbReference type="Rhea" id="RHEA-COMP:14737"/>
        <dbReference type="Rhea" id="RHEA-COMP:14739"/>
        <dbReference type="ChEBI" id="CHEBI:13193"/>
        <dbReference type="ChEBI" id="CHEBI:15378"/>
        <dbReference type="ChEBI" id="CHEBI:17319"/>
        <dbReference type="ChEBI" id="CHEBI:17499"/>
        <dbReference type="ChEBI" id="CHEBI:29917"/>
        <dbReference type="ChEBI" id="CHEBI:57844"/>
        <dbReference type="ChEBI" id="CHEBI:57856"/>
        <dbReference type="ChEBI" id="CHEBI:59789"/>
        <dbReference type="ChEBI" id="CHEBI:64428"/>
        <dbReference type="ChEBI" id="CHEBI:74415"/>
        <dbReference type="ChEBI" id="CHEBI:74417"/>
        <dbReference type="EC" id="2.8.4.3"/>
    </reaction>
</comment>
<comment type="cofactor">
    <cofactor evidence="1">
        <name>[4Fe-4S] cluster</name>
        <dbReference type="ChEBI" id="CHEBI:49883"/>
    </cofactor>
    <text evidence="1">Binds 2 [4Fe-4S] clusters. One cluster is coordinated with 3 cysteines and an exchangeable S-adenosyl-L-methionine.</text>
</comment>
<comment type="subunit">
    <text evidence="1">Monomer.</text>
</comment>
<comment type="subcellular location">
    <subcellularLocation>
        <location evidence="1">Cytoplasm</location>
    </subcellularLocation>
</comment>
<comment type="similarity">
    <text evidence="1">Belongs to the methylthiotransferase family. MiaB subfamily.</text>
</comment>
<sequence>MISMTKTVYIKTVGCQMNVLDSEMVIADLKRHGYTVVDTPGEADLLLYNTCSIREQAEEKTYSALGKLKETKARHPEKTIGVMGCMAQKDQETIFRRAPFVDMVVGPGQLHAIPDMLTKVTSGEGRQMAVSLGRKDGKQTVVARSHETFDPLRDPTMRPTPFQAYLRIQIGCDKFCTYCVVPNTRGPEQGRSPEEIVSEARVLAEQGALEITLLGQTVNSYRHRGPDGETDMAGLLERLHDIDGLKRIKFVTNYPKDMTARLLETIRDLPKVSPYLHVPAQSGSDAVLKRMKRGYTIADYMEMFERIETVLPEASVSSDFIVGFCGETDEDFQKSVKLIERCRFKNSFIFQYSVREGTKAAANLIDDVPREVKAARNNELLAVQDRISKEDNQKLIGDTVEVLVEGPSKKADKSDLDAPIVQMTGRTICDRIVVFDGNRRQAGQLMDIQIDDVSSHTLIGRVKTVEVVSLGMPGLAPSS</sequence>
<reference key="1">
    <citation type="journal article" date="2003" name="Proc. Natl. Acad. Sci. U.S.A.">
        <title>Complete genome sequence of the marine planctomycete Pirellula sp. strain 1.</title>
        <authorList>
            <person name="Gloeckner F.O."/>
            <person name="Kube M."/>
            <person name="Bauer M."/>
            <person name="Teeling H."/>
            <person name="Lombardot T."/>
            <person name="Ludwig W."/>
            <person name="Gade D."/>
            <person name="Beck A."/>
            <person name="Borzym K."/>
            <person name="Heitmann K."/>
            <person name="Rabus R."/>
            <person name="Schlesner H."/>
            <person name="Amann R."/>
            <person name="Reinhardt R."/>
        </authorList>
    </citation>
    <scope>NUCLEOTIDE SEQUENCE [LARGE SCALE GENOMIC DNA]</scope>
    <source>
        <strain>DSM 10527 / NCIMB 13988 / SH1</strain>
    </source>
</reference>
<keyword id="KW-0004">4Fe-4S</keyword>
<keyword id="KW-0963">Cytoplasm</keyword>
<keyword id="KW-0408">Iron</keyword>
<keyword id="KW-0411">Iron-sulfur</keyword>
<keyword id="KW-0479">Metal-binding</keyword>
<keyword id="KW-1185">Reference proteome</keyword>
<keyword id="KW-0949">S-adenosyl-L-methionine</keyword>
<keyword id="KW-0808">Transferase</keyword>
<keyword id="KW-0819">tRNA processing</keyword>
<protein>
    <recommendedName>
        <fullName evidence="1">tRNA-2-methylthio-N(6)-dimethylallyladenosine synthase</fullName>
        <ecNumber evidence="1">2.8.4.3</ecNumber>
    </recommendedName>
    <alternativeName>
        <fullName evidence="1">(Dimethylallyl)adenosine tRNA methylthiotransferase MiaB</fullName>
    </alternativeName>
    <alternativeName>
        <fullName evidence="1">tRNA-i(6)A37 methylthiotransferase</fullName>
    </alternativeName>
</protein>
<organism>
    <name type="scientific">Rhodopirellula baltica (strain DSM 10527 / NCIMB 13988 / SH1)</name>
    <dbReference type="NCBI Taxonomy" id="243090"/>
    <lineage>
        <taxon>Bacteria</taxon>
        <taxon>Pseudomonadati</taxon>
        <taxon>Planctomycetota</taxon>
        <taxon>Planctomycetia</taxon>
        <taxon>Pirellulales</taxon>
        <taxon>Pirellulaceae</taxon>
        <taxon>Rhodopirellula</taxon>
    </lineage>
</organism>
<evidence type="ECO:0000255" key="1">
    <source>
        <dbReference type="HAMAP-Rule" id="MF_01864"/>
    </source>
</evidence>
<evidence type="ECO:0000255" key="2">
    <source>
        <dbReference type="PROSITE-ProRule" id="PRU01266"/>
    </source>
</evidence>
<accession>Q7ULM9</accession>